<proteinExistence type="evidence at transcript level"/>
<reference key="1">
    <citation type="journal article" date="2000" name="Nature">
        <title>Sequence and analysis of chromosome 3 of the plant Arabidopsis thaliana.</title>
        <authorList>
            <person name="Salanoubat M."/>
            <person name="Lemcke K."/>
            <person name="Rieger M."/>
            <person name="Ansorge W."/>
            <person name="Unseld M."/>
            <person name="Fartmann B."/>
            <person name="Valle G."/>
            <person name="Bloecker H."/>
            <person name="Perez-Alonso M."/>
            <person name="Obermaier B."/>
            <person name="Delseny M."/>
            <person name="Boutry M."/>
            <person name="Grivell L.A."/>
            <person name="Mache R."/>
            <person name="Puigdomenech P."/>
            <person name="De Simone V."/>
            <person name="Choisne N."/>
            <person name="Artiguenave F."/>
            <person name="Robert C."/>
            <person name="Brottier P."/>
            <person name="Wincker P."/>
            <person name="Cattolico L."/>
            <person name="Weissenbach J."/>
            <person name="Saurin W."/>
            <person name="Quetier F."/>
            <person name="Schaefer M."/>
            <person name="Mueller-Auer S."/>
            <person name="Gabel C."/>
            <person name="Fuchs M."/>
            <person name="Benes V."/>
            <person name="Wurmbach E."/>
            <person name="Drzonek H."/>
            <person name="Erfle H."/>
            <person name="Jordan N."/>
            <person name="Bangert S."/>
            <person name="Wiedelmann R."/>
            <person name="Kranz H."/>
            <person name="Voss H."/>
            <person name="Holland R."/>
            <person name="Brandt P."/>
            <person name="Nyakatura G."/>
            <person name="Vezzi A."/>
            <person name="D'Angelo M."/>
            <person name="Pallavicini A."/>
            <person name="Toppo S."/>
            <person name="Simionati B."/>
            <person name="Conrad A."/>
            <person name="Hornischer K."/>
            <person name="Kauer G."/>
            <person name="Loehnert T.-H."/>
            <person name="Nordsiek G."/>
            <person name="Reichelt J."/>
            <person name="Scharfe M."/>
            <person name="Schoen O."/>
            <person name="Bargues M."/>
            <person name="Terol J."/>
            <person name="Climent J."/>
            <person name="Navarro P."/>
            <person name="Collado C."/>
            <person name="Perez-Perez A."/>
            <person name="Ottenwaelder B."/>
            <person name="Duchemin D."/>
            <person name="Cooke R."/>
            <person name="Laudie M."/>
            <person name="Berger-Llauro C."/>
            <person name="Purnelle B."/>
            <person name="Masuy D."/>
            <person name="de Haan M."/>
            <person name="Maarse A.C."/>
            <person name="Alcaraz J.-P."/>
            <person name="Cottet A."/>
            <person name="Casacuberta E."/>
            <person name="Monfort A."/>
            <person name="Argiriou A."/>
            <person name="Flores M."/>
            <person name="Liguori R."/>
            <person name="Vitale D."/>
            <person name="Mannhaupt G."/>
            <person name="Haase D."/>
            <person name="Schoof H."/>
            <person name="Rudd S."/>
            <person name="Zaccaria P."/>
            <person name="Mewes H.-W."/>
            <person name="Mayer K.F.X."/>
            <person name="Kaul S."/>
            <person name="Town C.D."/>
            <person name="Koo H.L."/>
            <person name="Tallon L.J."/>
            <person name="Jenkins J."/>
            <person name="Rooney T."/>
            <person name="Rizzo M."/>
            <person name="Walts A."/>
            <person name="Utterback T."/>
            <person name="Fujii C.Y."/>
            <person name="Shea T.P."/>
            <person name="Creasy T.H."/>
            <person name="Haas B."/>
            <person name="Maiti R."/>
            <person name="Wu D."/>
            <person name="Peterson J."/>
            <person name="Van Aken S."/>
            <person name="Pai G."/>
            <person name="Militscher J."/>
            <person name="Sellers P."/>
            <person name="Gill J.E."/>
            <person name="Feldblyum T.V."/>
            <person name="Preuss D."/>
            <person name="Lin X."/>
            <person name="Nierman W.C."/>
            <person name="Salzberg S.L."/>
            <person name="White O."/>
            <person name="Venter J.C."/>
            <person name="Fraser C.M."/>
            <person name="Kaneko T."/>
            <person name="Nakamura Y."/>
            <person name="Sato S."/>
            <person name="Kato T."/>
            <person name="Asamizu E."/>
            <person name="Sasamoto S."/>
            <person name="Kimura T."/>
            <person name="Idesawa K."/>
            <person name="Kawashima K."/>
            <person name="Kishida Y."/>
            <person name="Kiyokawa C."/>
            <person name="Kohara M."/>
            <person name="Matsumoto M."/>
            <person name="Matsuno A."/>
            <person name="Muraki A."/>
            <person name="Nakayama S."/>
            <person name="Nakazaki N."/>
            <person name="Shinpo S."/>
            <person name="Takeuchi C."/>
            <person name="Wada T."/>
            <person name="Watanabe A."/>
            <person name="Yamada M."/>
            <person name="Yasuda M."/>
            <person name="Tabata S."/>
        </authorList>
    </citation>
    <scope>NUCLEOTIDE SEQUENCE [LARGE SCALE GENOMIC DNA]</scope>
    <source>
        <strain>cv. Columbia</strain>
    </source>
</reference>
<reference key="2">
    <citation type="journal article" date="2017" name="Plant J.">
        <title>Araport11: a complete reannotation of the Arabidopsis thaliana reference genome.</title>
        <authorList>
            <person name="Cheng C.Y."/>
            <person name="Krishnakumar V."/>
            <person name="Chan A.P."/>
            <person name="Thibaud-Nissen F."/>
            <person name="Schobel S."/>
            <person name="Town C.D."/>
        </authorList>
    </citation>
    <scope>GENOME REANNOTATION</scope>
    <source>
        <strain>cv. Columbia</strain>
    </source>
</reference>
<reference key="3">
    <citation type="journal article" date="2002" name="Science">
        <title>Functional annotation of a full-length Arabidopsis cDNA collection.</title>
        <authorList>
            <person name="Seki M."/>
            <person name="Narusaka M."/>
            <person name="Kamiya A."/>
            <person name="Ishida J."/>
            <person name="Satou M."/>
            <person name="Sakurai T."/>
            <person name="Nakajima M."/>
            <person name="Enju A."/>
            <person name="Akiyama K."/>
            <person name="Oono Y."/>
            <person name="Muramatsu M."/>
            <person name="Hayashizaki Y."/>
            <person name="Kawai J."/>
            <person name="Carninci P."/>
            <person name="Itoh M."/>
            <person name="Ishii Y."/>
            <person name="Arakawa T."/>
            <person name="Shibata K."/>
            <person name="Shinagawa A."/>
            <person name="Shinozaki K."/>
        </authorList>
    </citation>
    <scope>NUCLEOTIDE SEQUENCE [LARGE SCALE MRNA] (ISOFORM 2)</scope>
    <source>
        <strain>cv. Columbia</strain>
    </source>
</reference>
<protein>
    <recommendedName>
        <fullName>UPF0496 protein At3g48650</fullName>
    </recommendedName>
</protein>
<dbReference type="EMBL" id="AL133315">
    <property type="protein sequence ID" value="CAB62354.1"/>
    <property type="molecule type" value="Genomic_DNA"/>
</dbReference>
<dbReference type="EMBL" id="CP002686">
    <property type="status" value="NOT_ANNOTATED_CDS"/>
    <property type="molecule type" value="Genomic_DNA"/>
</dbReference>
<dbReference type="EMBL" id="AK118176">
    <property type="protein sequence ID" value="BAC42799.1"/>
    <property type="molecule type" value="mRNA"/>
</dbReference>
<dbReference type="PIR" id="T46209">
    <property type="entry name" value="T46209"/>
</dbReference>
<dbReference type="STRING" id="3702.Q9SMN4"/>
<dbReference type="Araport" id="AT3G48650"/>
<dbReference type="TAIR" id="AT3G48650"/>
<dbReference type="InParanoid" id="Q9SMN4"/>
<dbReference type="PRO" id="PR:Q9SMN4"/>
<dbReference type="Proteomes" id="UP000006548">
    <property type="component" value="Chromosome 3"/>
</dbReference>
<dbReference type="GO" id="GO:0016020">
    <property type="term" value="C:membrane"/>
    <property type="evidence" value="ECO:0007669"/>
    <property type="project" value="UniProtKB-SubCell"/>
</dbReference>
<dbReference type="InterPro" id="IPR007749">
    <property type="entry name" value="DUF677"/>
</dbReference>
<dbReference type="PANTHER" id="PTHR31113:SF13">
    <property type="entry name" value="(RAPE) HYPOTHETICAL PROTEIN"/>
    <property type="match status" value="1"/>
</dbReference>
<dbReference type="PANTHER" id="PTHR31113">
    <property type="entry name" value="UPF0496 PROTEIN 3-RELATED"/>
    <property type="match status" value="1"/>
</dbReference>
<dbReference type="Pfam" id="PF05055">
    <property type="entry name" value="DUF677"/>
    <property type="match status" value="1"/>
</dbReference>
<organism>
    <name type="scientific">Arabidopsis thaliana</name>
    <name type="common">Mouse-ear cress</name>
    <dbReference type="NCBI Taxonomy" id="3702"/>
    <lineage>
        <taxon>Eukaryota</taxon>
        <taxon>Viridiplantae</taxon>
        <taxon>Streptophyta</taxon>
        <taxon>Embryophyta</taxon>
        <taxon>Tracheophyta</taxon>
        <taxon>Spermatophyta</taxon>
        <taxon>Magnoliopsida</taxon>
        <taxon>eudicotyledons</taxon>
        <taxon>Gunneridae</taxon>
        <taxon>Pentapetalae</taxon>
        <taxon>rosids</taxon>
        <taxon>malvids</taxon>
        <taxon>Brassicales</taxon>
        <taxon>Brassicaceae</taxon>
        <taxon>Camelineae</taxon>
        <taxon>Arabidopsis</taxon>
    </lineage>
</organism>
<sequence length="277" mass="32014">MAALVEFISDRVLSSCKSACKEDPKLRSYISALRERMDKLMEIKRSPFERESRDTDFGGNNKYAGTLEKLNKVKALGDLFGDEFTTQYKAIYDEHQMLLNKSHHMQLEHEKKHKNDKKSKRLGYIFFAAALLSVLALWIYLGAVSLVVAAKVVIEVATPSIAPLWKWVTEILEDSESEIAYKKLTDLFRSMDKNANLNIEFAKTFKSLVETLLTRIKPILETVDYAVEQREEETVKLVSKKSLRILKVLLTKSRKLVQMWLGVAKWSLREELMFWNT</sequence>
<feature type="chain" id="PRO_0000306895" description="UPF0496 protein At3g48650">
    <location>
        <begin position="1"/>
        <end position="277"/>
    </location>
</feature>
<feature type="transmembrane region" description="Helical" evidence="1">
    <location>
        <begin position="124"/>
        <end position="144"/>
    </location>
</feature>
<feature type="transmembrane region" description="Helical" evidence="1">
    <location>
        <begin position="145"/>
        <end position="165"/>
    </location>
</feature>
<feature type="splice variant" id="VSP_028562" description="In isoform 2." evidence="2">
    <original>FERESRDTDFGGNNKYAGTLE</original>
    <variation>VEEARLENHPRRTQSLRSSTF</variation>
    <location>
        <begin position="48"/>
        <end position="68"/>
    </location>
</feature>
<feature type="splice variant" id="VSP_028563" description="In isoform 2." evidence="2">
    <location>
        <begin position="69"/>
        <end position="277"/>
    </location>
</feature>
<name>U496J_ARATH</name>
<gene>
    <name type="ordered locus">At3g48650</name>
    <name type="ORF">T8P19.160</name>
</gene>
<keyword id="KW-0025">Alternative splicing</keyword>
<keyword id="KW-0472">Membrane</keyword>
<keyword id="KW-1185">Reference proteome</keyword>
<keyword id="KW-0812">Transmembrane</keyword>
<keyword id="KW-1133">Transmembrane helix</keyword>
<comment type="subcellular location">
    <subcellularLocation>
        <location evidence="3">Membrane</location>
        <topology evidence="3">Multi-pass membrane protein</topology>
    </subcellularLocation>
</comment>
<comment type="alternative products">
    <event type="alternative splicing"/>
    <isoform>
        <id>Q9SMN4-1</id>
        <name>1</name>
        <sequence type="displayed"/>
    </isoform>
    <isoform>
        <id>Q9SMN4-2</id>
        <name>2</name>
        <sequence type="described" ref="VSP_028562 VSP_028563"/>
    </isoform>
</comment>
<comment type="miscellaneous">
    <molecule>Isoform 2</molecule>
    <text evidence="3">May be due to intron retention.</text>
</comment>
<comment type="similarity">
    <text evidence="3">Belongs to the UPF0496 family.</text>
</comment>
<evidence type="ECO:0000255" key="1"/>
<evidence type="ECO:0000303" key="2">
    <source>
    </source>
</evidence>
<evidence type="ECO:0000305" key="3"/>
<accession>Q9SMN4</accession>
<accession>Q8GXL2</accession>